<sequence>MRHPLVMGNWKLNGSTNLVNELIAGLRKELSTVDGCGVAIAPPAIYLDQANHQLAGSRIALGAQNVDVNLSGAFTGETSAEMLKDIGAKYIIIGHSERRTYHKESDEFIAKKFGVLKDAGLIPVLCIGETEAENEAGQTEAVCARQLDAVLNTLGAKAFENTVVAYEPVWAIGTGKSATPAQAQAVHKFIRDHIAKQDAAVAEQVIIQYGGSVNAANAAELFTQPDIDGALVGGASLKADAFAVIVKAAADAKRG</sequence>
<reference key="1">
    <citation type="journal article" date="2004" name="Proc. Natl. Acad. Sci. U.S.A.">
        <title>Genome sequence of the enterobacterial phytopathogen Erwinia carotovora subsp. atroseptica and characterization of virulence factors.</title>
        <authorList>
            <person name="Bell K.S."/>
            <person name="Sebaihia M."/>
            <person name="Pritchard L."/>
            <person name="Holden M.T.G."/>
            <person name="Hyman L.J."/>
            <person name="Holeva M.C."/>
            <person name="Thomson N.R."/>
            <person name="Bentley S.D."/>
            <person name="Churcher L.J.C."/>
            <person name="Mungall K."/>
            <person name="Atkin R."/>
            <person name="Bason N."/>
            <person name="Brooks K."/>
            <person name="Chillingworth T."/>
            <person name="Clark K."/>
            <person name="Doggett J."/>
            <person name="Fraser A."/>
            <person name="Hance Z."/>
            <person name="Hauser H."/>
            <person name="Jagels K."/>
            <person name="Moule S."/>
            <person name="Norbertczak H."/>
            <person name="Ormond D."/>
            <person name="Price C."/>
            <person name="Quail M.A."/>
            <person name="Sanders M."/>
            <person name="Walker D."/>
            <person name="Whitehead S."/>
            <person name="Salmond G.P.C."/>
            <person name="Birch P.R.J."/>
            <person name="Parkhill J."/>
            <person name="Toth I.K."/>
        </authorList>
    </citation>
    <scope>NUCLEOTIDE SEQUENCE [LARGE SCALE GENOMIC DNA]</scope>
    <source>
        <strain>SCRI 1043 / ATCC BAA-672</strain>
    </source>
</reference>
<accession>Q6CZ81</accession>
<name>TPIS_PECAS</name>
<proteinExistence type="inferred from homology"/>
<evidence type="ECO:0000255" key="1">
    <source>
        <dbReference type="HAMAP-Rule" id="MF_00147"/>
    </source>
</evidence>
<organism>
    <name type="scientific">Pectobacterium atrosepticum (strain SCRI 1043 / ATCC BAA-672)</name>
    <name type="common">Erwinia carotovora subsp. atroseptica</name>
    <dbReference type="NCBI Taxonomy" id="218491"/>
    <lineage>
        <taxon>Bacteria</taxon>
        <taxon>Pseudomonadati</taxon>
        <taxon>Pseudomonadota</taxon>
        <taxon>Gammaproteobacteria</taxon>
        <taxon>Enterobacterales</taxon>
        <taxon>Pectobacteriaceae</taxon>
        <taxon>Pectobacterium</taxon>
    </lineage>
</organism>
<feature type="chain" id="PRO_0000307461" description="Triosephosphate isomerase">
    <location>
        <begin position="1"/>
        <end position="255"/>
    </location>
</feature>
<feature type="active site" description="Electrophile" evidence="1">
    <location>
        <position position="95"/>
    </location>
</feature>
<feature type="active site" description="Proton acceptor" evidence="1">
    <location>
        <position position="167"/>
    </location>
</feature>
<feature type="binding site" evidence="1">
    <location>
        <begin position="9"/>
        <end position="11"/>
    </location>
    <ligand>
        <name>substrate</name>
    </ligand>
</feature>
<feature type="binding site" evidence="1">
    <location>
        <position position="173"/>
    </location>
    <ligand>
        <name>substrate</name>
    </ligand>
</feature>
<feature type="binding site" evidence="1">
    <location>
        <position position="212"/>
    </location>
    <ligand>
        <name>substrate</name>
    </ligand>
</feature>
<feature type="binding site" evidence="1">
    <location>
        <begin position="233"/>
        <end position="234"/>
    </location>
    <ligand>
        <name>substrate</name>
    </ligand>
</feature>
<gene>
    <name evidence="1" type="primary">tpiA</name>
    <name type="ordered locus">ECA4272</name>
</gene>
<dbReference type="EC" id="5.3.1.1" evidence="1"/>
<dbReference type="EMBL" id="BX950851">
    <property type="protein sequence ID" value="CAG77169.1"/>
    <property type="molecule type" value="Genomic_DNA"/>
</dbReference>
<dbReference type="RefSeq" id="WP_011095741.1">
    <property type="nucleotide sequence ID" value="NC_004547.2"/>
</dbReference>
<dbReference type="SMR" id="Q6CZ81"/>
<dbReference type="STRING" id="218491.ECA4272"/>
<dbReference type="GeneID" id="57210944"/>
<dbReference type="KEGG" id="eca:ECA4272"/>
<dbReference type="PATRIC" id="fig|218491.5.peg.4349"/>
<dbReference type="eggNOG" id="COG0149">
    <property type="taxonomic scope" value="Bacteria"/>
</dbReference>
<dbReference type="HOGENOM" id="CLU_024251_2_1_6"/>
<dbReference type="OrthoDB" id="9809429at2"/>
<dbReference type="UniPathway" id="UPA00109">
    <property type="reaction ID" value="UER00189"/>
</dbReference>
<dbReference type="UniPathway" id="UPA00138"/>
<dbReference type="Proteomes" id="UP000007966">
    <property type="component" value="Chromosome"/>
</dbReference>
<dbReference type="GO" id="GO:0005829">
    <property type="term" value="C:cytosol"/>
    <property type="evidence" value="ECO:0007669"/>
    <property type="project" value="TreeGrafter"/>
</dbReference>
<dbReference type="GO" id="GO:0004807">
    <property type="term" value="F:triose-phosphate isomerase activity"/>
    <property type="evidence" value="ECO:0007669"/>
    <property type="project" value="UniProtKB-UniRule"/>
</dbReference>
<dbReference type="GO" id="GO:0006094">
    <property type="term" value="P:gluconeogenesis"/>
    <property type="evidence" value="ECO:0007669"/>
    <property type="project" value="UniProtKB-UniRule"/>
</dbReference>
<dbReference type="GO" id="GO:0046166">
    <property type="term" value="P:glyceraldehyde-3-phosphate biosynthetic process"/>
    <property type="evidence" value="ECO:0007669"/>
    <property type="project" value="TreeGrafter"/>
</dbReference>
<dbReference type="GO" id="GO:0019563">
    <property type="term" value="P:glycerol catabolic process"/>
    <property type="evidence" value="ECO:0007669"/>
    <property type="project" value="TreeGrafter"/>
</dbReference>
<dbReference type="GO" id="GO:0006096">
    <property type="term" value="P:glycolytic process"/>
    <property type="evidence" value="ECO:0007669"/>
    <property type="project" value="UniProtKB-UniRule"/>
</dbReference>
<dbReference type="CDD" id="cd00311">
    <property type="entry name" value="TIM"/>
    <property type="match status" value="1"/>
</dbReference>
<dbReference type="FunFam" id="3.20.20.70:FF:000020">
    <property type="entry name" value="Triosephosphate isomerase"/>
    <property type="match status" value="1"/>
</dbReference>
<dbReference type="Gene3D" id="3.20.20.70">
    <property type="entry name" value="Aldolase class I"/>
    <property type="match status" value="1"/>
</dbReference>
<dbReference type="HAMAP" id="MF_00147_B">
    <property type="entry name" value="TIM_B"/>
    <property type="match status" value="1"/>
</dbReference>
<dbReference type="InterPro" id="IPR013785">
    <property type="entry name" value="Aldolase_TIM"/>
</dbReference>
<dbReference type="InterPro" id="IPR035990">
    <property type="entry name" value="TIM_sf"/>
</dbReference>
<dbReference type="InterPro" id="IPR022896">
    <property type="entry name" value="TrioseP_Isoase_bac/euk"/>
</dbReference>
<dbReference type="InterPro" id="IPR000652">
    <property type="entry name" value="Triosephosphate_isomerase"/>
</dbReference>
<dbReference type="InterPro" id="IPR020861">
    <property type="entry name" value="Triosephosphate_isomerase_AS"/>
</dbReference>
<dbReference type="NCBIfam" id="TIGR00419">
    <property type="entry name" value="tim"/>
    <property type="match status" value="1"/>
</dbReference>
<dbReference type="PANTHER" id="PTHR21139">
    <property type="entry name" value="TRIOSEPHOSPHATE ISOMERASE"/>
    <property type="match status" value="1"/>
</dbReference>
<dbReference type="PANTHER" id="PTHR21139:SF42">
    <property type="entry name" value="TRIOSEPHOSPHATE ISOMERASE"/>
    <property type="match status" value="1"/>
</dbReference>
<dbReference type="Pfam" id="PF00121">
    <property type="entry name" value="TIM"/>
    <property type="match status" value="1"/>
</dbReference>
<dbReference type="SUPFAM" id="SSF51351">
    <property type="entry name" value="Triosephosphate isomerase (TIM)"/>
    <property type="match status" value="1"/>
</dbReference>
<dbReference type="PROSITE" id="PS00171">
    <property type="entry name" value="TIM_1"/>
    <property type="match status" value="1"/>
</dbReference>
<dbReference type="PROSITE" id="PS51440">
    <property type="entry name" value="TIM_2"/>
    <property type="match status" value="1"/>
</dbReference>
<protein>
    <recommendedName>
        <fullName evidence="1">Triosephosphate isomerase</fullName>
        <shortName evidence="1">TIM</shortName>
        <shortName evidence="1">TPI</shortName>
        <ecNumber evidence="1">5.3.1.1</ecNumber>
    </recommendedName>
    <alternativeName>
        <fullName evidence="1">Triose-phosphate isomerase</fullName>
    </alternativeName>
</protein>
<comment type="function">
    <text evidence="1">Involved in the gluconeogenesis. Catalyzes stereospecifically the conversion of dihydroxyacetone phosphate (DHAP) to D-glyceraldehyde-3-phosphate (G3P).</text>
</comment>
<comment type="catalytic activity">
    <reaction evidence="1">
        <text>D-glyceraldehyde 3-phosphate = dihydroxyacetone phosphate</text>
        <dbReference type="Rhea" id="RHEA:18585"/>
        <dbReference type="ChEBI" id="CHEBI:57642"/>
        <dbReference type="ChEBI" id="CHEBI:59776"/>
        <dbReference type="EC" id="5.3.1.1"/>
    </reaction>
</comment>
<comment type="pathway">
    <text evidence="1">Carbohydrate biosynthesis; gluconeogenesis.</text>
</comment>
<comment type="pathway">
    <text evidence="1">Carbohydrate degradation; glycolysis; D-glyceraldehyde 3-phosphate from glycerone phosphate: step 1/1.</text>
</comment>
<comment type="subunit">
    <text evidence="1">Homodimer.</text>
</comment>
<comment type="subcellular location">
    <subcellularLocation>
        <location evidence="1">Cytoplasm</location>
    </subcellularLocation>
</comment>
<comment type="similarity">
    <text evidence="1">Belongs to the triosephosphate isomerase family.</text>
</comment>
<keyword id="KW-0963">Cytoplasm</keyword>
<keyword id="KW-0312">Gluconeogenesis</keyword>
<keyword id="KW-0324">Glycolysis</keyword>
<keyword id="KW-0413">Isomerase</keyword>
<keyword id="KW-1185">Reference proteome</keyword>